<accession>Q5CZV0</accession>
<dbReference type="EMBL" id="BC090696">
    <property type="protein sequence ID" value="AAH90696.1"/>
    <property type="molecule type" value="mRNA"/>
</dbReference>
<dbReference type="RefSeq" id="NP_001013338.1">
    <property type="nucleotide sequence ID" value="NM_001013320.1"/>
</dbReference>
<dbReference type="FunCoup" id="Q5CZV0">
    <property type="interactions" value="1227"/>
</dbReference>
<dbReference type="STRING" id="7955.ENSDARP00000059091"/>
<dbReference type="GlyCosmos" id="Q5CZV0">
    <property type="glycosylation" value="3 sites, No reported glycans"/>
</dbReference>
<dbReference type="PaxDb" id="7955-ENSDARP00000059091"/>
<dbReference type="GeneID" id="503742"/>
<dbReference type="KEGG" id="dre:503742"/>
<dbReference type="AGR" id="ZFIN:ZDB-GENE-050306-22"/>
<dbReference type="CTD" id="503742"/>
<dbReference type="ZFIN" id="ZDB-GENE-050306-22">
    <property type="gene designation" value="tmem182a"/>
</dbReference>
<dbReference type="eggNOG" id="ENOG502QVS4">
    <property type="taxonomic scope" value="Eukaryota"/>
</dbReference>
<dbReference type="InParanoid" id="Q5CZV0"/>
<dbReference type="OrthoDB" id="9942154at2759"/>
<dbReference type="PhylomeDB" id="Q5CZV0"/>
<dbReference type="PRO" id="PR:Q5CZV0"/>
<dbReference type="Proteomes" id="UP000000437">
    <property type="component" value="Chromosome 9"/>
</dbReference>
<dbReference type="GO" id="GO:0005886">
    <property type="term" value="C:plasma membrane"/>
    <property type="evidence" value="ECO:0007669"/>
    <property type="project" value="UniProtKB-SubCell"/>
</dbReference>
<dbReference type="GO" id="GO:0007517">
    <property type="term" value="P:muscle organ development"/>
    <property type="evidence" value="ECO:0007669"/>
    <property type="project" value="UniProtKB-KW"/>
</dbReference>
<dbReference type="GO" id="GO:0014906">
    <property type="term" value="P:myotube cell development involved in skeletal muscle regeneration"/>
    <property type="evidence" value="ECO:0000250"/>
    <property type="project" value="UniProtKB"/>
</dbReference>
<dbReference type="GO" id="GO:0014908">
    <property type="term" value="P:myotube differentiation involved in skeletal muscle regeneration"/>
    <property type="evidence" value="ECO:0000250"/>
    <property type="project" value="UniProtKB"/>
</dbReference>
<dbReference type="GO" id="GO:0045662">
    <property type="term" value="P:negative regulation of myoblast differentiation"/>
    <property type="evidence" value="ECO:0000250"/>
    <property type="project" value="UniProtKB"/>
</dbReference>
<dbReference type="GO" id="GO:1901740">
    <property type="term" value="P:negative regulation of myoblast fusion"/>
    <property type="evidence" value="ECO:0000250"/>
    <property type="project" value="UniProtKB"/>
</dbReference>
<dbReference type="Gene3D" id="1.20.140.150">
    <property type="match status" value="1"/>
</dbReference>
<dbReference type="InterPro" id="IPR004031">
    <property type="entry name" value="PMP22/EMP/MP20/Claudin"/>
</dbReference>
<dbReference type="InterPro" id="IPR026763">
    <property type="entry name" value="TMEM182"/>
</dbReference>
<dbReference type="PANTHER" id="PTHR32012:SF0">
    <property type="entry name" value="TRANSMEMBRANE PROTEIN 182"/>
    <property type="match status" value="1"/>
</dbReference>
<dbReference type="PANTHER" id="PTHR32012">
    <property type="entry name" value="TRANSMEMBRANE PROTEIN 182-RELATED"/>
    <property type="match status" value="1"/>
</dbReference>
<dbReference type="Pfam" id="PF13903">
    <property type="entry name" value="Claudin_2"/>
    <property type="match status" value="1"/>
</dbReference>
<proteinExistence type="evidence at transcript level"/>
<sequence length="248" mass="27971">MKIHVAGFFAGLFGALATLFILLSFGTDYWLLASETCNSHLNSPVTSERGDILVNQVHDPNSEAPNITFHHEGFFWRCTFDDVMNDGNLWKFWFENQPHVRVCKPAYLLPFPFPDQSYNTTSYQTAIIYRGFWSVSMLVGVAAVVAGGFIIICAAPFASHRLYKAGGGLYLISGFFVLVVTAMYVIWIDVLDVISLYTEYQKLNKCADFELNKTYGLSFMFAPVGVFFCFLSGLLFLVIGRTVHHQYN</sequence>
<feature type="signal peptide" evidence="2">
    <location>
        <begin position="1"/>
        <end position="26"/>
    </location>
</feature>
<feature type="chain" id="PRO_0000360988" description="Transmembrane protein 182">
    <location>
        <begin position="27"/>
        <end position="248"/>
    </location>
</feature>
<feature type="topological domain" description="Extracellular" evidence="2">
    <location>
        <begin position="27"/>
        <end position="136"/>
    </location>
</feature>
<feature type="transmembrane region" description="Helical" evidence="2">
    <location>
        <begin position="137"/>
        <end position="157"/>
    </location>
</feature>
<feature type="topological domain" description="Cytoplasmic" evidence="2">
    <location>
        <begin position="158"/>
        <end position="167"/>
    </location>
</feature>
<feature type="transmembrane region" description="Helical" evidence="2">
    <location>
        <begin position="168"/>
        <end position="188"/>
    </location>
</feature>
<feature type="topological domain" description="Extracellular" evidence="2">
    <location>
        <begin position="189"/>
        <end position="218"/>
    </location>
</feature>
<feature type="transmembrane region" description="Helical" evidence="2">
    <location>
        <begin position="219"/>
        <end position="239"/>
    </location>
</feature>
<feature type="topological domain" description="Cytoplasmic" evidence="2">
    <location>
        <begin position="240"/>
        <end position="248"/>
    </location>
</feature>
<feature type="glycosylation site" description="N-linked (GlcNAc...) asparagine" evidence="2">
    <location>
        <position position="66"/>
    </location>
</feature>
<feature type="glycosylation site" description="N-linked (GlcNAc...) asparagine" evidence="2">
    <location>
        <position position="119"/>
    </location>
</feature>
<feature type="glycosylation site" description="N-linked (GlcNAc...) asparagine" evidence="2">
    <location>
        <position position="212"/>
    </location>
</feature>
<reference key="1">
    <citation type="submission" date="2005-02" db="EMBL/GenBank/DDBJ databases">
        <authorList>
            <consortium name="NIH - Zebrafish Gene Collection (ZGC) project"/>
        </authorList>
    </citation>
    <scope>NUCLEOTIDE SEQUENCE [LARGE SCALE MRNA]</scope>
    <source>
        <tissue>Embryo</tissue>
    </source>
</reference>
<comment type="function">
    <text evidence="1">May negatively regulate myogenesis and skeletal muscle regeneration.</text>
</comment>
<comment type="subcellular location">
    <subcellularLocation>
        <location evidence="1">Cell membrane</location>
        <topology evidence="2">Multi-pass membrane protein</topology>
    </subcellularLocation>
</comment>
<comment type="similarity">
    <text evidence="3">Belongs to the TMEM182 family.</text>
</comment>
<evidence type="ECO:0000250" key="1">
    <source>
        <dbReference type="UniProtKB" id="A0A1D5NY17"/>
    </source>
</evidence>
<evidence type="ECO:0000255" key="2"/>
<evidence type="ECO:0000305" key="3"/>
<keyword id="KW-1003">Cell membrane</keyword>
<keyword id="KW-0325">Glycoprotein</keyword>
<keyword id="KW-0472">Membrane</keyword>
<keyword id="KW-0517">Myogenesis</keyword>
<keyword id="KW-1185">Reference proteome</keyword>
<keyword id="KW-0732">Signal</keyword>
<keyword id="KW-0812">Transmembrane</keyword>
<keyword id="KW-1133">Transmembrane helix</keyword>
<name>TM182_DANRE</name>
<organism>
    <name type="scientific">Danio rerio</name>
    <name type="common">Zebrafish</name>
    <name type="synonym">Brachydanio rerio</name>
    <dbReference type="NCBI Taxonomy" id="7955"/>
    <lineage>
        <taxon>Eukaryota</taxon>
        <taxon>Metazoa</taxon>
        <taxon>Chordata</taxon>
        <taxon>Craniata</taxon>
        <taxon>Vertebrata</taxon>
        <taxon>Euteleostomi</taxon>
        <taxon>Actinopterygii</taxon>
        <taxon>Neopterygii</taxon>
        <taxon>Teleostei</taxon>
        <taxon>Ostariophysi</taxon>
        <taxon>Cypriniformes</taxon>
        <taxon>Danionidae</taxon>
        <taxon>Danioninae</taxon>
        <taxon>Danio</taxon>
    </lineage>
</organism>
<protein>
    <recommendedName>
        <fullName>Transmembrane protein 182</fullName>
    </recommendedName>
</protein>
<gene>
    <name type="primary">tmem182a</name>
    <name type="ORF">zgc:113334</name>
</gene>